<reference key="1">
    <citation type="journal article" date="2003" name="Biochim. Biophys. Acta">
        <title>Characterization of the major allergens purified from the venom of the paper wasp Polistes gallicus.</title>
        <authorList>
            <person name="Pantera B."/>
            <person name="Hoffman D.R."/>
            <person name="Carresi L."/>
            <person name="Cappugi G."/>
            <person name="Turillazzi S."/>
            <person name="Manao G."/>
            <person name="Severino M."/>
            <person name="Spadolini I."/>
            <person name="Orsomando G."/>
            <person name="Moneti G."/>
            <person name="Pazzagli L."/>
        </authorList>
    </citation>
    <scope>PROTEIN SEQUENCE</scope>
    <scope>CATALYTIC ACTIVITY</scope>
    <scope>BIOPHYSICOCHEMICAL PROPERTIES</scope>
    <scope>MASS SPECTROMETRY</scope>
    <scope>SUBCELLULAR LOCATION</scope>
    <scope>ALLERGEN</scope>
    <source>
        <tissue>Venom</tissue>
    </source>
</reference>
<proteinExistence type="evidence at protein level"/>
<name>PA1_POLGA</name>
<organism>
    <name type="scientific">Polistes gallicus</name>
    <name type="common">Paper wasp</name>
    <dbReference type="NCBI Taxonomy" id="34730"/>
    <lineage>
        <taxon>Eukaryota</taxon>
        <taxon>Metazoa</taxon>
        <taxon>Ecdysozoa</taxon>
        <taxon>Arthropoda</taxon>
        <taxon>Hexapoda</taxon>
        <taxon>Insecta</taxon>
        <taxon>Pterygota</taxon>
        <taxon>Neoptera</taxon>
        <taxon>Endopterygota</taxon>
        <taxon>Hymenoptera</taxon>
        <taxon>Apocrita</taxon>
        <taxon>Aculeata</taxon>
        <taxon>Vespoidea</taxon>
        <taxon>Vespidae</taxon>
        <taxon>Polistinae</taxon>
        <taxon>Polistini</taxon>
        <taxon>Polistes</taxon>
    </lineage>
</organism>
<protein>
    <recommendedName>
        <fullName evidence="4">Phospholipase A1</fullName>
        <shortName evidence="5">PLA1</shortName>
        <ecNumber evidence="3">3.1.1.32</ecNumber>
    </recommendedName>
    <allergenName evidence="4">Pol g 1</allergenName>
</protein>
<sequence length="42" mass="4985">GITPDCTFNEKDIELHVYSRDKRNGIILKKEILKNYDLFKES</sequence>
<keyword id="KW-0020">Allergen</keyword>
<keyword id="KW-0204">Cytolysis</keyword>
<keyword id="KW-0903">Direct protein sequencing</keyword>
<keyword id="KW-1015">Disulfide bond</keyword>
<keyword id="KW-0354">Hemolysis</keyword>
<keyword id="KW-0378">Hydrolase</keyword>
<keyword id="KW-0442">Lipid degradation</keyword>
<keyword id="KW-0443">Lipid metabolism</keyword>
<keyword id="KW-0964">Secreted</keyword>
<comment type="function">
    <text evidence="2 3">Catalyzes the hydrolysis of phosphatidylcholine with phospholipase A1 activity (PubMed:14572904). May act as an allergen and induce hemolytic activity (By similarity).</text>
</comment>
<comment type="catalytic activity">
    <reaction evidence="3">
        <text>a 1,2-diacyl-sn-glycero-3-phosphocholine + H2O = a 2-acyl-sn-glycero-3-phosphocholine + a fatty acid + H(+)</text>
        <dbReference type="Rhea" id="RHEA:18689"/>
        <dbReference type="ChEBI" id="CHEBI:15377"/>
        <dbReference type="ChEBI" id="CHEBI:15378"/>
        <dbReference type="ChEBI" id="CHEBI:28868"/>
        <dbReference type="ChEBI" id="CHEBI:57643"/>
        <dbReference type="ChEBI" id="CHEBI:57875"/>
        <dbReference type="EC" id="3.1.1.32"/>
    </reaction>
</comment>
<comment type="biophysicochemical properties">
    <kinetics>
        <Vmax evidence="3">283.2 umol/min/mg enzyme</Vmax>
    </kinetics>
</comment>
<comment type="subcellular location">
    <subcellularLocation>
        <location evidence="3">Secreted</location>
    </subcellularLocation>
</comment>
<comment type="tissue specificity">
    <text evidence="6">Expressed by the venom gland.</text>
</comment>
<comment type="PTM">
    <text evidence="1">Contains six disulfide bonds.</text>
</comment>
<comment type="mass spectrometry" mass="33475.0" method="Electrospray" evidence="3"/>
<comment type="allergen">
    <text evidence="3">Causes an allergic reaction in human.</text>
</comment>
<comment type="similarity">
    <text evidence="5">Belongs to the AB hydrolase superfamily. Lipase family.</text>
</comment>
<evidence type="ECO:0000250" key="1"/>
<evidence type="ECO:0000250" key="2">
    <source>
        <dbReference type="UniProtKB" id="P0DMB4"/>
    </source>
</evidence>
<evidence type="ECO:0000269" key="3">
    <source>
    </source>
</evidence>
<evidence type="ECO:0000303" key="4">
    <source>
    </source>
</evidence>
<evidence type="ECO:0000305" key="5"/>
<evidence type="ECO:0000305" key="6">
    <source>
    </source>
</evidence>
<dbReference type="EC" id="3.1.1.32" evidence="3"/>
<dbReference type="Allergome" id="1208">
    <property type="allergen name" value="Pol g 1"/>
</dbReference>
<dbReference type="Allergome" id="3443">
    <property type="allergen name" value="Pol g 1.0101"/>
</dbReference>
<dbReference type="GO" id="GO:0005576">
    <property type="term" value="C:extracellular region"/>
    <property type="evidence" value="ECO:0007669"/>
    <property type="project" value="UniProtKB-SubCell"/>
</dbReference>
<dbReference type="GO" id="GO:0008970">
    <property type="term" value="F:phospholipase A1 activity"/>
    <property type="evidence" value="ECO:0007669"/>
    <property type="project" value="UniProtKB-EC"/>
</dbReference>
<dbReference type="GO" id="GO:0031640">
    <property type="term" value="P:killing of cells of another organism"/>
    <property type="evidence" value="ECO:0007669"/>
    <property type="project" value="UniProtKB-KW"/>
</dbReference>
<dbReference type="GO" id="GO:0016042">
    <property type="term" value="P:lipid catabolic process"/>
    <property type="evidence" value="ECO:0007669"/>
    <property type="project" value="UniProtKB-KW"/>
</dbReference>
<accession>P83542</accession>
<feature type="chain" id="PRO_0000090377" description="Phospholipase A1">
    <location>
        <begin position="1"/>
        <end position="42" status="greater than"/>
    </location>
</feature>
<feature type="disulfide bond" evidence="1">
    <location>
        <begin position="6"/>
        <end status="unknown"/>
    </location>
</feature>
<feature type="non-terminal residue" evidence="5">
    <location>
        <position position="42"/>
    </location>
</feature>